<sequence>MQRLDPWHGRCELRFEHRQTEHGDAGTVHQGGCSAPFKLLRAEQGKNGRCELPILHTAGGLVGGDQLSIALDLNTNSRCLITSVAAQKVYGSIGRSRLHPEGQWARQQVHCKLANSSDLEWLPQELVLYANALFEQHLTVQLPANASFLSAEIVRLGRTAAGETLQQGRWRSALSLCRRSVEPHQASRWELVDRLDLGGDALNDQHGLNKRPVFGSLVWAAPMPLNGEALTQLLELVRSDREGLNGTMRCSALDQGLVARYSGPSSRDARFWFSRIWARTRALRALSAPQIPRVWPLQEQPLPPSSFKTNTAVPAVRTH</sequence>
<protein>
    <recommendedName>
        <fullName evidence="1">Urease accessory protein UreD</fullName>
    </recommendedName>
</protein>
<keyword id="KW-0143">Chaperone</keyword>
<keyword id="KW-0963">Cytoplasm</keyword>
<keyword id="KW-0996">Nickel insertion</keyword>
<gene>
    <name evidence="1" type="primary">ureD</name>
</gene>
<proteinExistence type="inferred from homology"/>
<evidence type="ECO:0000255" key="1">
    <source>
        <dbReference type="HAMAP-Rule" id="MF_01384"/>
    </source>
</evidence>
<evidence type="ECO:0000256" key="2">
    <source>
        <dbReference type="SAM" id="MobiDB-lite"/>
    </source>
</evidence>
<feature type="chain" id="PRO_0000067616" description="Urease accessory protein UreD">
    <location>
        <begin position="1"/>
        <end position="319"/>
    </location>
</feature>
<feature type="region of interest" description="Disordered" evidence="2">
    <location>
        <begin position="298"/>
        <end position="319"/>
    </location>
</feature>
<accession>O87399</accession>
<comment type="function">
    <text evidence="1">Required for maturation of urease via the functional incorporation of the urease nickel metallocenter.</text>
</comment>
<comment type="subunit">
    <text evidence="1">UreD, UreF and UreG form a complex that acts as a GTP-hydrolysis-dependent molecular chaperone, activating the urease apoprotein by helping to assemble the nickel containing metallocenter of UreC. The UreE protein probably delivers the nickel.</text>
</comment>
<comment type="subcellular location">
    <subcellularLocation>
        <location evidence="1">Cytoplasm</location>
    </subcellularLocation>
</comment>
<comment type="similarity">
    <text evidence="1">Belongs to the UreD family.</text>
</comment>
<name>URED_SYNPV</name>
<dbReference type="EMBL" id="AF056189">
    <property type="protein sequence ID" value="AAC61499.1"/>
    <property type="molecule type" value="Genomic_DNA"/>
</dbReference>
<dbReference type="RefSeq" id="WP_006042765.1">
    <property type="nucleotide sequence ID" value="NZ_CH724168.1"/>
</dbReference>
<dbReference type="SMR" id="O87399"/>
<dbReference type="STRING" id="59931.WH7805_09824"/>
<dbReference type="eggNOG" id="COG0829">
    <property type="taxonomic scope" value="Bacteria"/>
</dbReference>
<dbReference type="OrthoDB" id="9798842at2"/>
<dbReference type="PhylomeDB" id="O87399"/>
<dbReference type="GO" id="GO:0005737">
    <property type="term" value="C:cytoplasm"/>
    <property type="evidence" value="ECO:0007669"/>
    <property type="project" value="UniProtKB-SubCell"/>
</dbReference>
<dbReference type="GO" id="GO:0016151">
    <property type="term" value="F:nickel cation binding"/>
    <property type="evidence" value="ECO:0007669"/>
    <property type="project" value="UniProtKB-UniRule"/>
</dbReference>
<dbReference type="HAMAP" id="MF_01384">
    <property type="entry name" value="UreD"/>
    <property type="match status" value="1"/>
</dbReference>
<dbReference type="InterPro" id="IPR002669">
    <property type="entry name" value="UreD"/>
</dbReference>
<dbReference type="PANTHER" id="PTHR33643">
    <property type="entry name" value="UREASE ACCESSORY PROTEIN D"/>
    <property type="match status" value="1"/>
</dbReference>
<dbReference type="PANTHER" id="PTHR33643:SF1">
    <property type="entry name" value="UREASE ACCESSORY PROTEIN D"/>
    <property type="match status" value="1"/>
</dbReference>
<dbReference type="Pfam" id="PF01774">
    <property type="entry name" value="UreD"/>
    <property type="match status" value="1"/>
</dbReference>
<reference key="1">
    <citation type="journal article" date="1999" name="Microbiology">
        <title>The marine cyanobacterium Synechococcus sp. WH7805 requires urease (urea amidohydrolase, EC 3.5.1.5) to utilize urea as a nitrogen source: molecular-genetic and biochemical analysis of the enzyme.</title>
        <authorList>
            <person name="Collier J.L."/>
            <person name="Brahamsha B."/>
            <person name="Palenik B."/>
        </authorList>
    </citation>
    <scope>NUCLEOTIDE SEQUENCE [GENOMIC DNA]</scope>
</reference>
<organism>
    <name type="scientific">Synechococcus sp. (strain WH7805)</name>
    <dbReference type="NCBI Taxonomy" id="59931"/>
    <lineage>
        <taxon>Bacteria</taxon>
        <taxon>Bacillati</taxon>
        <taxon>Cyanobacteriota</taxon>
        <taxon>Cyanophyceae</taxon>
        <taxon>Synechococcales</taxon>
        <taxon>Synechococcaceae</taxon>
        <taxon>Synechococcus</taxon>
    </lineage>
</organism>